<name>ATPH_CAPBU</name>
<sequence length="81" mass="7976">MNPLVSAASVIAAGLAVGLASIGPGVGQGTAAGQAVEGIARQPEAEGKIRGTLLLSLAFMEALTIYGLVVALALLFANPFV</sequence>
<gene>
    <name evidence="1" type="primary">atpH</name>
</gene>
<organism>
    <name type="scientific">Capsella bursa-pastoris</name>
    <name type="common">Shepherd's purse</name>
    <name type="synonym">Thlaspi bursa-pastoris</name>
    <dbReference type="NCBI Taxonomy" id="3719"/>
    <lineage>
        <taxon>Eukaryota</taxon>
        <taxon>Viridiplantae</taxon>
        <taxon>Streptophyta</taxon>
        <taxon>Embryophyta</taxon>
        <taxon>Tracheophyta</taxon>
        <taxon>Spermatophyta</taxon>
        <taxon>Magnoliopsida</taxon>
        <taxon>eudicotyledons</taxon>
        <taxon>Gunneridae</taxon>
        <taxon>Pentapetalae</taxon>
        <taxon>rosids</taxon>
        <taxon>malvids</taxon>
        <taxon>Brassicales</taxon>
        <taxon>Brassicaceae</taxon>
        <taxon>Camelineae</taxon>
        <taxon>Capsella</taxon>
    </lineage>
</organism>
<feature type="chain" id="PRO_0000362893" description="ATP synthase subunit c, chloroplastic">
    <location>
        <begin position="1"/>
        <end position="81"/>
    </location>
</feature>
<feature type="transmembrane region" description="Helical" evidence="1">
    <location>
        <begin position="7"/>
        <end position="27"/>
    </location>
</feature>
<feature type="transmembrane region" description="Helical" evidence="1">
    <location>
        <begin position="57"/>
        <end position="77"/>
    </location>
</feature>
<feature type="site" description="Reversibly protonated during proton transport" evidence="1">
    <location>
        <position position="61"/>
    </location>
</feature>
<protein>
    <recommendedName>
        <fullName evidence="1">ATP synthase subunit c, chloroplastic</fullName>
    </recommendedName>
    <alternativeName>
        <fullName evidence="1">ATP synthase F(0) sector subunit c</fullName>
    </alternativeName>
    <alternativeName>
        <fullName evidence="1">ATPase subunit III</fullName>
    </alternativeName>
    <alternativeName>
        <fullName evidence="1">F-type ATPase subunit c</fullName>
        <shortName evidence="1">F-ATPase subunit c</shortName>
    </alternativeName>
    <alternativeName>
        <fullName evidence="1">Lipid-binding protein</fullName>
    </alternativeName>
</protein>
<comment type="function">
    <text evidence="1">F(1)F(0) ATP synthase produces ATP from ADP in the presence of a proton or sodium gradient. F-type ATPases consist of two structural domains, F(1) containing the extramembraneous catalytic core and F(0) containing the membrane proton channel, linked together by a central stalk and a peripheral stalk. During catalysis, ATP synthesis in the catalytic domain of F(1) is coupled via a rotary mechanism of the central stalk subunits to proton translocation.</text>
</comment>
<comment type="function">
    <text evidence="1">Key component of the F(0) channel; it plays a direct role in translocation across the membrane. A homomeric c-ring of between 10-14 subunits forms the central stalk rotor element with the F(1) delta and epsilon subunits.</text>
</comment>
<comment type="subunit">
    <text evidence="1">F-type ATPases have 2 components, F(1) - the catalytic core - and F(0) - the membrane proton channel. F(1) has five subunits: alpha(3), beta(3), gamma(1), delta(1), epsilon(1). F(0) has four main subunits: a(1), b(1), b'(1) and c(10-14). The alpha and beta chains form an alternating ring which encloses part of the gamma chain. F(1) is attached to F(0) by a central stalk formed by the gamma and epsilon chains, while a peripheral stalk is formed by the delta, b and b' chains.</text>
</comment>
<comment type="subcellular location">
    <subcellularLocation>
        <location evidence="1">Plastid</location>
        <location evidence="1">Chloroplast thylakoid membrane</location>
        <topology evidence="1">Multi-pass membrane protein</topology>
    </subcellularLocation>
</comment>
<comment type="miscellaneous">
    <text>In plastids the F-type ATPase is also known as CF(1)CF(0).</text>
</comment>
<comment type="similarity">
    <text evidence="1">Belongs to the ATPase C chain family.</text>
</comment>
<geneLocation type="chloroplast"/>
<proteinExistence type="inferred from homology"/>
<evidence type="ECO:0000255" key="1">
    <source>
        <dbReference type="HAMAP-Rule" id="MF_01396"/>
    </source>
</evidence>
<reference key="1">
    <citation type="submission" date="2007-03" db="EMBL/GenBank/DDBJ databases">
        <title>Sequencing analysis of Capsella bursa-pastoris JO22 chloroplast DNA.</title>
        <authorList>
            <person name="Hosouchi T."/>
            <person name="Tsuruoka H."/>
            <person name="Kotani H."/>
        </authorList>
    </citation>
    <scope>NUCLEOTIDE SEQUENCE [LARGE SCALE GENOMIC DNA]</scope>
</reference>
<keyword id="KW-0066">ATP synthesis</keyword>
<keyword id="KW-0138">CF(0)</keyword>
<keyword id="KW-0150">Chloroplast</keyword>
<keyword id="KW-0375">Hydrogen ion transport</keyword>
<keyword id="KW-0406">Ion transport</keyword>
<keyword id="KW-0446">Lipid-binding</keyword>
<keyword id="KW-0472">Membrane</keyword>
<keyword id="KW-0934">Plastid</keyword>
<keyword id="KW-0793">Thylakoid</keyword>
<keyword id="KW-0812">Transmembrane</keyword>
<keyword id="KW-1133">Transmembrane helix</keyword>
<keyword id="KW-0813">Transport</keyword>
<accession>A4QKH9</accession>
<dbReference type="EMBL" id="AP009371">
    <property type="protein sequence ID" value="BAF50184.1"/>
    <property type="molecule type" value="Genomic_DNA"/>
</dbReference>
<dbReference type="RefSeq" id="YP_001123360.1">
    <property type="nucleotide sequence ID" value="NC_009270.1"/>
</dbReference>
<dbReference type="SMR" id="A4QKH9"/>
<dbReference type="GeneID" id="4961704"/>
<dbReference type="GO" id="GO:0009535">
    <property type="term" value="C:chloroplast thylakoid membrane"/>
    <property type="evidence" value="ECO:0007669"/>
    <property type="project" value="UniProtKB-SubCell"/>
</dbReference>
<dbReference type="GO" id="GO:0045259">
    <property type="term" value="C:proton-transporting ATP synthase complex"/>
    <property type="evidence" value="ECO:0007669"/>
    <property type="project" value="UniProtKB-KW"/>
</dbReference>
<dbReference type="GO" id="GO:0033177">
    <property type="term" value="C:proton-transporting two-sector ATPase complex, proton-transporting domain"/>
    <property type="evidence" value="ECO:0007669"/>
    <property type="project" value="InterPro"/>
</dbReference>
<dbReference type="GO" id="GO:0008289">
    <property type="term" value="F:lipid binding"/>
    <property type="evidence" value="ECO:0007669"/>
    <property type="project" value="UniProtKB-KW"/>
</dbReference>
<dbReference type="GO" id="GO:0046933">
    <property type="term" value="F:proton-transporting ATP synthase activity, rotational mechanism"/>
    <property type="evidence" value="ECO:0007669"/>
    <property type="project" value="UniProtKB-UniRule"/>
</dbReference>
<dbReference type="CDD" id="cd18183">
    <property type="entry name" value="ATP-synt_Fo_c_ATPH"/>
    <property type="match status" value="1"/>
</dbReference>
<dbReference type="FunFam" id="1.20.20.10:FF:000001">
    <property type="entry name" value="ATP synthase subunit c, chloroplastic"/>
    <property type="match status" value="1"/>
</dbReference>
<dbReference type="Gene3D" id="1.20.20.10">
    <property type="entry name" value="F1F0 ATP synthase subunit C"/>
    <property type="match status" value="1"/>
</dbReference>
<dbReference type="HAMAP" id="MF_01396">
    <property type="entry name" value="ATP_synth_c_bact"/>
    <property type="match status" value="1"/>
</dbReference>
<dbReference type="InterPro" id="IPR005953">
    <property type="entry name" value="ATP_synth_csu_bac/chlpt"/>
</dbReference>
<dbReference type="InterPro" id="IPR000454">
    <property type="entry name" value="ATP_synth_F0_csu"/>
</dbReference>
<dbReference type="InterPro" id="IPR020537">
    <property type="entry name" value="ATP_synth_F0_csu_DDCD_BS"/>
</dbReference>
<dbReference type="InterPro" id="IPR038662">
    <property type="entry name" value="ATP_synth_F0_csu_sf"/>
</dbReference>
<dbReference type="InterPro" id="IPR002379">
    <property type="entry name" value="ATPase_proteolipid_c-like_dom"/>
</dbReference>
<dbReference type="InterPro" id="IPR035921">
    <property type="entry name" value="F/V-ATP_Csub_sf"/>
</dbReference>
<dbReference type="NCBIfam" id="TIGR01260">
    <property type="entry name" value="ATP_synt_c"/>
    <property type="match status" value="1"/>
</dbReference>
<dbReference type="NCBIfam" id="NF005608">
    <property type="entry name" value="PRK07354.1"/>
    <property type="match status" value="1"/>
</dbReference>
<dbReference type="PANTHER" id="PTHR10031">
    <property type="entry name" value="ATP SYNTHASE LIPID-BINDING PROTEIN, MITOCHONDRIAL"/>
    <property type="match status" value="1"/>
</dbReference>
<dbReference type="PANTHER" id="PTHR10031:SF0">
    <property type="entry name" value="ATPASE PROTEIN 9"/>
    <property type="match status" value="1"/>
</dbReference>
<dbReference type="Pfam" id="PF00137">
    <property type="entry name" value="ATP-synt_C"/>
    <property type="match status" value="1"/>
</dbReference>
<dbReference type="PRINTS" id="PR00124">
    <property type="entry name" value="ATPASEC"/>
</dbReference>
<dbReference type="SUPFAM" id="SSF81333">
    <property type="entry name" value="F1F0 ATP synthase subunit C"/>
    <property type="match status" value="1"/>
</dbReference>
<dbReference type="PROSITE" id="PS00605">
    <property type="entry name" value="ATPASE_C"/>
    <property type="match status" value="1"/>
</dbReference>